<comment type="function">
    <text evidence="1">Core subunit of the mitochondrial membrane respiratory chain NADH dehydrogenase (Complex I) that is believed to belong to the minimal assembly required for catalysis. Complex I functions in the transfer of electrons from NADH to the respiratory chain. The immediate electron acceptor for the enzyme is believed to be ubiquinone (By similarity).</text>
</comment>
<comment type="catalytic activity">
    <reaction>
        <text>a ubiquinone + NADH + 5 H(+)(in) = a ubiquinol + NAD(+) + 4 H(+)(out)</text>
        <dbReference type="Rhea" id="RHEA:29091"/>
        <dbReference type="Rhea" id="RHEA-COMP:9565"/>
        <dbReference type="Rhea" id="RHEA-COMP:9566"/>
        <dbReference type="ChEBI" id="CHEBI:15378"/>
        <dbReference type="ChEBI" id="CHEBI:16389"/>
        <dbReference type="ChEBI" id="CHEBI:17976"/>
        <dbReference type="ChEBI" id="CHEBI:57540"/>
        <dbReference type="ChEBI" id="CHEBI:57945"/>
        <dbReference type="EC" id="7.1.1.2"/>
    </reaction>
</comment>
<comment type="subcellular location">
    <subcellularLocation>
        <location evidence="1">Mitochondrion inner membrane</location>
        <topology evidence="1">Multi-pass membrane protein</topology>
    </subcellularLocation>
</comment>
<comment type="similarity">
    <text evidence="3">Belongs to the complex I subunit 5 family.</text>
</comment>
<sequence length="612" mass="67582">MHPTPLILSSSLLLVIIILIYPVLTSLNPNPQNPKWATSHVKTAVSSAFLISLLPLAVFLDQGTETIVTNWHWMNTTMFDINISFKFDYYSLVFTPIALYVTWSILEFASWYMHADPYVNRFFKYLLTFLIAMITLVTANNMFQLFIGWEGVGIMSFLLIGWWYGRADANTAALQAWIYNRVGDIGLIMSMAWLAMNLNSWEIQQIFFLSKDFDMTLPLMGLILAATGKSAQFGLHPWLPAAMEGPTPVSALLHSSTMVVAGIFLLIRLHAIMENNQLALTTCLCLGALTSLFTAACALTQNDIKKIVAFSTSSQLGLMMVTIGLNQPQLAFLHICTHAFFKAMLFLCSGSIIHSLNDEQDIRKMGGLQNLLPFTSTCLTIGSLALTGTPFLAGFFSKDAIIEAMNTSYLNAWALTLTLIATSFTAVYSFRVVFFVSMGTPRFLPLSPINENNPAVINPIKRLAWGSIIAGLIITSNLLPSKSPVMTMPPTLKMAALMVTAIGLFTAMELATLTSKQYKTNPITQTHHFSNMLGFFPSVVHRLMKKLNLTLGQLAATQMVDQTWFEAAGPKGASSTQIKMAKITSDTQRGMIKTYLTIFLLTTALATRLATI</sequence>
<reference key="1">
    <citation type="journal article" date="1992" name="Nucleic Acids Res.">
        <title>The complete nucleotide sequence of the Crossostoma lacustre mitochondrial genome: conservation and variations among vertebrates.</title>
        <authorList>
            <person name="Tzeng C.-S."/>
            <person name="Hui C.-F."/>
            <person name="Shen S.-C."/>
            <person name="Huang P.C."/>
        </authorList>
    </citation>
    <scope>NUCLEOTIDE SEQUENCE [GENOMIC DNA]</scope>
</reference>
<evidence type="ECO:0000250" key="1"/>
<evidence type="ECO:0000255" key="2"/>
<evidence type="ECO:0000305" key="3"/>
<protein>
    <recommendedName>
        <fullName>NADH-ubiquinone oxidoreductase chain 5</fullName>
        <ecNumber>7.1.1.2</ecNumber>
    </recommendedName>
    <alternativeName>
        <fullName>NADH dehydrogenase subunit 5</fullName>
    </alternativeName>
</protein>
<gene>
    <name type="primary">MT-ND5</name>
    <name type="synonym">MTND5</name>
    <name type="synonym">NADH5</name>
    <name type="synonym">ND5</name>
</gene>
<proteinExistence type="inferred from homology"/>
<dbReference type="EC" id="7.1.1.2"/>
<dbReference type="EMBL" id="M91245">
    <property type="protein sequence ID" value="AAB96821.1"/>
    <property type="molecule type" value="Genomic_DNA"/>
</dbReference>
<dbReference type="PIR" id="S35471">
    <property type="entry name" value="S35471"/>
</dbReference>
<dbReference type="RefSeq" id="NP_008313.1">
    <property type="nucleotide sequence ID" value="NC_001727.1"/>
</dbReference>
<dbReference type="SMR" id="P34195"/>
<dbReference type="GeneID" id="807993"/>
<dbReference type="CTD" id="4540"/>
<dbReference type="GO" id="GO:0005743">
    <property type="term" value="C:mitochondrial inner membrane"/>
    <property type="evidence" value="ECO:0007669"/>
    <property type="project" value="UniProtKB-SubCell"/>
</dbReference>
<dbReference type="GO" id="GO:0008137">
    <property type="term" value="F:NADH dehydrogenase (ubiquinone) activity"/>
    <property type="evidence" value="ECO:0007669"/>
    <property type="project" value="UniProtKB-EC"/>
</dbReference>
<dbReference type="GO" id="GO:0042773">
    <property type="term" value="P:ATP synthesis coupled electron transport"/>
    <property type="evidence" value="ECO:0007669"/>
    <property type="project" value="InterPro"/>
</dbReference>
<dbReference type="GO" id="GO:0015990">
    <property type="term" value="P:electron transport coupled proton transport"/>
    <property type="evidence" value="ECO:0007669"/>
    <property type="project" value="TreeGrafter"/>
</dbReference>
<dbReference type="InterPro" id="IPR010934">
    <property type="entry name" value="NADH_DH_su5_C"/>
</dbReference>
<dbReference type="InterPro" id="IPR018393">
    <property type="entry name" value="NADHpl_OxRdtase_5_subgr"/>
</dbReference>
<dbReference type="InterPro" id="IPR001750">
    <property type="entry name" value="ND/Mrp_TM"/>
</dbReference>
<dbReference type="InterPro" id="IPR003945">
    <property type="entry name" value="NU5C-like"/>
</dbReference>
<dbReference type="InterPro" id="IPR001516">
    <property type="entry name" value="Proton_antipo_N"/>
</dbReference>
<dbReference type="NCBIfam" id="TIGR01974">
    <property type="entry name" value="NDH_I_L"/>
    <property type="match status" value="1"/>
</dbReference>
<dbReference type="PANTHER" id="PTHR42829">
    <property type="entry name" value="NADH-UBIQUINONE OXIDOREDUCTASE CHAIN 5"/>
    <property type="match status" value="1"/>
</dbReference>
<dbReference type="PANTHER" id="PTHR42829:SF2">
    <property type="entry name" value="NADH-UBIQUINONE OXIDOREDUCTASE CHAIN 5"/>
    <property type="match status" value="1"/>
</dbReference>
<dbReference type="Pfam" id="PF06455">
    <property type="entry name" value="NADH5_C"/>
    <property type="match status" value="1"/>
</dbReference>
<dbReference type="Pfam" id="PF00361">
    <property type="entry name" value="Proton_antipo_M"/>
    <property type="match status" value="1"/>
</dbReference>
<dbReference type="Pfam" id="PF00662">
    <property type="entry name" value="Proton_antipo_N"/>
    <property type="match status" value="1"/>
</dbReference>
<dbReference type="PRINTS" id="PR01434">
    <property type="entry name" value="NADHDHGNASE5"/>
</dbReference>
<geneLocation type="mitochondrion"/>
<name>NU5M_FORLA</name>
<organism>
    <name type="scientific">Formosania lacustris</name>
    <name type="common">Oriental stream loach</name>
    <name type="synonym">Crossostoma lacustre</name>
    <dbReference type="NCBI Taxonomy" id="7980"/>
    <lineage>
        <taxon>Eukaryota</taxon>
        <taxon>Metazoa</taxon>
        <taxon>Chordata</taxon>
        <taxon>Craniata</taxon>
        <taxon>Vertebrata</taxon>
        <taxon>Euteleostomi</taxon>
        <taxon>Actinopterygii</taxon>
        <taxon>Neopterygii</taxon>
        <taxon>Teleostei</taxon>
        <taxon>Ostariophysi</taxon>
        <taxon>Cypriniformes</taxon>
        <taxon>Gastromyzontidae</taxon>
        <taxon>Formosania</taxon>
    </lineage>
</organism>
<feature type="chain" id="PRO_0000118082" description="NADH-ubiquinone oxidoreductase chain 5">
    <location>
        <begin position="1"/>
        <end position="612"/>
    </location>
</feature>
<feature type="transmembrane region" description="Helical" evidence="2">
    <location>
        <begin position="4"/>
        <end position="24"/>
    </location>
</feature>
<feature type="transmembrane region" description="Helical" evidence="2">
    <location>
        <begin position="40"/>
        <end position="60"/>
    </location>
</feature>
<feature type="transmembrane region" description="Helical" evidence="2">
    <location>
        <begin position="92"/>
        <end position="112"/>
    </location>
</feature>
<feature type="transmembrane region" description="Helical" evidence="2">
    <location>
        <begin position="122"/>
        <end position="142"/>
    </location>
</feature>
<feature type="transmembrane region" description="Helical" evidence="2">
    <location>
        <begin position="145"/>
        <end position="165"/>
    </location>
</feature>
<feature type="transmembrane region" description="Helical" evidence="2">
    <location>
        <begin position="176"/>
        <end position="196"/>
    </location>
</feature>
<feature type="transmembrane region" description="Helical" evidence="2">
    <location>
        <begin position="216"/>
        <end position="238"/>
    </location>
</feature>
<feature type="transmembrane region" description="Helical" evidence="2">
    <location>
        <begin position="247"/>
        <end position="267"/>
    </location>
</feature>
<feature type="transmembrane region" description="Helical" evidence="2">
    <location>
        <begin position="278"/>
        <end position="298"/>
    </location>
</feature>
<feature type="transmembrane region" description="Helical" evidence="2">
    <location>
        <begin position="307"/>
        <end position="327"/>
    </location>
</feature>
<feature type="transmembrane region" description="Helical" evidence="2">
    <location>
        <begin position="330"/>
        <end position="350"/>
    </location>
</feature>
<feature type="transmembrane region" description="Helical" evidence="2">
    <location>
        <begin position="376"/>
        <end position="396"/>
    </location>
</feature>
<feature type="transmembrane region" description="Helical" evidence="2">
    <location>
        <begin position="410"/>
        <end position="430"/>
    </location>
</feature>
<feature type="transmembrane region" description="Helical" evidence="2">
    <location>
        <begin position="454"/>
        <end position="474"/>
    </location>
</feature>
<feature type="transmembrane region" description="Helical" evidence="2">
    <location>
        <begin position="494"/>
        <end position="514"/>
    </location>
</feature>
<feature type="transmembrane region" description="Helical" evidence="2">
    <location>
        <begin position="589"/>
        <end position="611"/>
    </location>
</feature>
<accession>P34195</accession>
<keyword id="KW-0249">Electron transport</keyword>
<keyword id="KW-0472">Membrane</keyword>
<keyword id="KW-0496">Mitochondrion</keyword>
<keyword id="KW-0999">Mitochondrion inner membrane</keyword>
<keyword id="KW-0520">NAD</keyword>
<keyword id="KW-0679">Respiratory chain</keyword>
<keyword id="KW-1278">Translocase</keyword>
<keyword id="KW-0812">Transmembrane</keyword>
<keyword id="KW-1133">Transmembrane helix</keyword>
<keyword id="KW-0813">Transport</keyword>
<keyword id="KW-0830">Ubiquinone</keyword>